<keyword id="KW-0963">Cytoplasm</keyword>
<keyword id="KW-0520">NAD</keyword>
<keyword id="KW-0560">Oxidoreductase</keyword>
<keyword id="KW-1185">Reference proteome</keyword>
<organism>
    <name type="scientific">Xenopus laevis</name>
    <name type="common">African clawed frog</name>
    <dbReference type="NCBI Taxonomy" id="8355"/>
    <lineage>
        <taxon>Eukaryota</taxon>
        <taxon>Metazoa</taxon>
        <taxon>Chordata</taxon>
        <taxon>Craniata</taxon>
        <taxon>Vertebrata</taxon>
        <taxon>Euteleostomi</taxon>
        <taxon>Amphibia</taxon>
        <taxon>Batrachia</taxon>
        <taxon>Anura</taxon>
        <taxon>Pipoidea</taxon>
        <taxon>Pipidae</taxon>
        <taxon>Xenopodinae</taxon>
        <taxon>Xenopus</taxon>
        <taxon>Xenopus</taxon>
    </lineage>
</organism>
<reference key="1">
    <citation type="journal article" date="1994" name="Proc. Natl. Acad. Sci. U.S.A.">
        <title>Evolutionary relationships of lactate dehydrogenases (LDHs) from mammals, birds, an amphibian, fish, barley, and bacteria: LDH cDNA sequences from Xenopus, pig, and rat.</title>
        <authorList>
            <person name="Tsuji S."/>
            <person name="Qureshi M.A."/>
            <person name="Hou E.W."/>
            <person name="Fitch W.M."/>
            <person name="Li S.S.-L."/>
        </authorList>
    </citation>
    <scope>NUCLEOTIDE SEQUENCE [MRNA]</scope>
    <source>
        <tissue>Liver</tissue>
    </source>
</reference>
<reference key="2">
    <citation type="submission" date="2004-08" db="EMBL/GenBank/DDBJ databases">
        <authorList>
            <consortium name="NIH - Xenopus Gene Collection (XGC) project"/>
        </authorList>
    </citation>
    <scope>NUCLEOTIDE SEQUENCE [LARGE SCALE MRNA]</scope>
    <source>
        <tissue>Eye</tissue>
    </source>
</reference>
<dbReference type="EC" id="1.1.1.27" evidence="2"/>
<dbReference type="EMBL" id="U07179">
    <property type="protein sequence ID" value="AAA50437.1"/>
    <property type="molecule type" value="mRNA"/>
</dbReference>
<dbReference type="EMBL" id="BC080054">
    <property type="protein sequence ID" value="AAH80054.1"/>
    <property type="molecule type" value="mRNA"/>
</dbReference>
<dbReference type="PIR" id="I51656">
    <property type="entry name" value="I51656"/>
</dbReference>
<dbReference type="RefSeq" id="NP_001081050.1">
    <property type="nucleotide sequence ID" value="NM_001087581.1"/>
</dbReference>
<dbReference type="SMR" id="P42120"/>
<dbReference type="DNASU" id="394355"/>
<dbReference type="GeneID" id="394355"/>
<dbReference type="KEGG" id="xla:394355"/>
<dbReference type="AGR" id="Xenbase:XB-GENE-6254440"/>
<dbReference type="CTD" id="394355"/>
<dbReference type="Xenbase" id="XB-GENE-6254440">
    <property type="gene designation" value="ldhb.L"/>
</dbReference>
<dbReference type="OrthoDB" id="5405561at2759"/>
<dbReference type="UniPathway" id="UPA00554">
    <property type="reaction ID" value="UER00611"/>
</dbReference>
<dbReference type="Proteomes" id="UP000186698">
    <property type="component" value="Chromosome 3L"/>
</dbReference>
<dbReference type="Bgee" id="394355">
    <property type="expression patterns" value="Expressed in heart and 20 other cell types or tissues"/>
</dbReference>
<dbReference type="GO" id="GO:0005739">
    <property type="term" value="C:mitochondrion"/>
    <property type="evidence" value="ECO:0000318"/>
    <property type="project" value="GO_Central"/>
</dbReference>
<dbReference type="GO" id="GO:0004459">
    <property type="term" value="F:L-lactate dehydrogenase activity"/>
    <property type="evidence" value="ECO:0000318"/>
    <property type="project" value="GO_Central"/>
</dbReference>
<dbReference type="GO" id="GO:0006089">
    <property type="term" value="P:lactate metabolic process"/>
    <property type="evidence" value="ECO:0000318"/>
    <property type="project" value="GO_Central"/>
</dbReference>
<dbReference type="GO" id="GO:0006090">
    <property type="term" value="P:pyruvate metabolic process"/>
    <property type="evidence" value="ECO:0000318"/>
    <property type="project" value="GO_Central"/>
</dbReference>
<dbReference type="CDD" id="cd05293">
    <property type="entry name" value="LDH_1"/>
    <property type="match status" value="1"/>
</dbReference>
<dbReference type="FunFam" id="3.40.50.720:FF:000029">
    <property type="entry name" value="L-lactate dehydrogenase A chain"/>
    <property type="match status" value="1"/>
</dbReference>
<dbReference type="FunFam" id="3.90.110.10:FF:000003">
    <property type="entry name" value="L-lactate dehydrogenase A chain"/>
    <property type="match status" value="1"/>
</dbReference>
<dbReference type="Gene3D" id="3.90.110.10">
    <property type="entry name" value="Lactate dehydrogenase/glycoside hydrolase, family 4, C-terminal"/>
    <property type="match status" value="1"/>
</dbReference>
<dbReference type="Gene3D" id="3.40.50.720">
    <property type="entry name" value="NAD(P)-binding Rossmann-like Domain"/>
    <property type="match status" value="1"/>
</dbReference>
<dbReference type="HAMAP" id="MF_00488">
    <property type="entry name" value="Lactate_dehydrog"/>
    <property type="match status" value="1"/>
</dbReference>
<dbReference type="InterPro" id="IPR001557">
    <property type="entry name" value="L-lactate/malate_DH"/>
</dbReference>
<dbReference type="InterPro" id="IPR011304">
    <property type="entry name" value="L-lactate_DH"/>
</dbReference>
<dbReference type="InterPro" id="IPR018177">
    <property type="entry name" value="L-lactate_DH_AS"/>
</dbReference>
<dbReference type="InterPro" id="IPR022383">
    <property type="entry name" value="Lactate/malate_DH_C"/>
</dbReference>
<dbReference type="InterPro" id="IPR001236">
    <property type="entry name" value="Lactate/malate_DH_N"/>
</dbReference>
<dbReference type="InterPro" id="IPR015955">
    <property type="entry name" value="Lactate_DH/Glyco_Ohase_4_C"/>
</dbReference>
<dbReference type="InterPro" id="IPR036291">
    <property type="entry name" value="NAD(P)-bd_dom_sf"/>
</dbReference>
<dbReference type="NCBIfam" id="TIGR01771">
    <property type="entry name" value="L-LDH-NAD"/>
    <property type="match status" value="1"/>
</dbReference>
<dbReference type="NCBIfam" id="NF000824">
    <property type="entry name" value="PRK00066.1"/>
    <property type="match status" value="1"/>
</dbReference>
<dbReference type="PANTHER" id="PTHR43128">
    <property type="entry name" value="L-2-HYDROXYCARBOXYLATE DEHYDROGENASE (NAD(P)(+))"/>
    <property type="match status" value="1"/>
</dbReference>
<dbReference type="PANTHER" id="PTHR43128:SF2">
    <property type="entry name" value="L-LACTATE DEHYDROGENASE B CHAIN"/>
    <property type="match status" value="1"/>
</dbReference>
<dbReference type="Pfam" id="PF02866">
    <property type="entry name" value="Ldh_1_C"/>
    <property type="match status" value="1"/>
</dbReference>
<dbReference type="Pfam" id="PF00056">
    <property type="entry name" value="Ldh_1_N"/>
    <property type="match status" value="1"/>
</dbReference>
<dbReference type="PIRSF" id="PIRSF000102">
    <property type="entry name" value="Lac_mal_DH"/>
    <property type="match status" value="1"/>
</dbReference>
<dbReference type="PRINTS" id="PR00086">
    <property type="entry name" value="LLDHDRGNASE"/>
</dbReference>
<dbReference type="SUPFAM" id="SSF56327">
    <property type="entry name" value="LDH C-terminal domain-like"/>
    <property type="match status" value="1"/>
</dbReference>
<dbReference type="SUPFAM" id="SSF51735">
    <property type="entry name" value="NAD(P)-binding Rossmann-fold domains"/>
    <property type="match status" value="1"/>
</dbReference>
<dbReference type="PROSITE" id="PS00064">
    <property type="entry name" value="L_LDH"/>
    <property type="match status" value="1"/>
</dbReference>
<comment type="function">
    <text evidence="2">Interconverts simultaneously and stereospecifically pyruvate and lactate with concomitant interconversion of NADH and NAD(+).</text>
</comment>
<comment type="catalytic activity">
    <reaction evidence="2">
        <text>(S)-lactate + NAD(+) = pyruvate + NADH + H(+)</text>
        <dbReference type="Rhea" id="RHEA:23444"/>
        <dbReference type="ChEBI" id="CHEBI:15361"/>
        <dbReference type="ChEBI" id="CHEBI:15378"/>
        <dbReference type="ChEBI" id="CHEBI:16651"/>
        <dbReference type="ChEBI" id="CHEBI:57540"/>
        <dbReference type="ChEBI" id="CHEBI:57945"/>
        <dbReference type="EC" id="1.1.1.27"/>
    </reaction>
    <physiologicalReaction direction="left-to-right" evidence="2">
        <dbReference type="Rhea" id="RHEA:23445"/>
    </physiologicalReaction>
    <physiologicalReaction direction="right-to-left" evidence="2">
        <dbReference type="Rhea" id="RHEA:23446"/>
    </physiologicalReaction>
</comment>
<comment type="pathway">
    <text evidence="2">Fermentation; pyruvate fermentation to lactate; (S)-lactate from pyruvate: step 1/1.</text>
</comment>
<comment type="subunit">
    <text>Homotetramer.</text>
</comment>
<comment type="subcellular location">
    <subcellularLocation>
        <location evidence="1">Cytoplasm</location>
    </subcellularLocation>
</comment>
<comment type="similarity">
    <text evidence="3">Belongs to the LDH/MDH superfamily. LDH family.</text>
</comment>
<protein>
    <recommendedName>
        <fullName>L-lactate dehydrogenase A chain</fullName>
        <shortName>LDH-A</shortName>
        <ecNumber evidence="2">1.1.1.27</ecNumber>
    </recommendedName>
</protein>
<feature type="initiator methionine" description="Removed" evidence="1">
    <location>
        <position position="1"/>
    </location>
</feature>
<feature type="chain" id="PRO_0000168485" description="L-lactate dehydrogenase A chain">
    <location>
        <begin position="2"/>
        <end position="334"/>
    </location>
</feature>
<feature type="active site" description="Proton acceptor" evidence="1">
    <location>
        <position position="194"/>
    </location>
</feature>
<feature type="binding site" evidence="1">
    <location>
        <begin position="30"/>
        <end position="58"/>
    </location>
    <ligand>
        <name>NAD(+)</name>
        <dbReference type="ChEBI" id="CHEBI:57540"/>
    </ligand>
</feature>
<feature type="binding site" evidence="1">
    <location>
        <position position="100"/>
    </location>
    <ligand>
        <name>NAD(+)</name>
        <dbReference type="ChEBI" id="CHEBI:57540"/>
    </ligand>
</feature>
<feature type="binding site" evidence="1">
    <location>
        <position position="107"/>
    </location>
    <ligand>
        <name>substrate</name>
    </ligand>
</feature>
<feature type="binding site" evidence="1">
    <location>
        <position position="139"/>
    </location>
    <ligand>
        <name>NAD(+)</name>
        <dbReference type="ChEBI" id="CHEBI:57540"/>
    </ligand>
</feature>
<feature type="binding site" evidence="1">
    <location>
        <position position="139"/>
    </location>
    <ligand>
        <name>substrate</name>
    </ligand>
</feature>
<feature type="binding site" evidence="1">
    <location>
        <position position="170"/>
    </location>
    <ligand>
        <name>substrate</name>
    </ligand>
</feature>
<feature type="binding site" evidence="1">
    <location>
        <position position="249"/>
    </location>
    <ligand>
        <name>substrate</name>
    </ligand>
</feature>
<sequence>MASVQEKLITCVCQDKPAKPTNKITIVGVGQVGMACAVSVLLKELADELALVDILEDKLKGEMMDLQHGSLFLKTPTIVADKDYSVTANSRIVVVTGGVRQQEGESRLNLVQRNVNIFKFIIPQIVKYSPDCIILVVSNPVDILTYVTWKLSGLPQHRIIGSGTNLDSARFRHLIAEKLGVHPTSCHGFILGEHGDSSVAVWSGVNVAGVSLQSLKPDIGTDEDCCKWKEVHKQVVDSAYEVIKLKGYTNWAIGFSVAEIVESITKNLGRVHPVSTMVKGMYGIETEVFLSLPCVLNGNGLTSVINQKLKDNEVGQLQKSAETLWSIQKDLKDL</sequence>
<gene>
    <name type="primary">ldha</name>
</gene>
<proteinExistence type="evidence at transcript level"/>
<evidence type="ECO:0000250" key="1"/>
<evidence type="ECO:0000250" key="2">
    <source>
        <dbReference type="UniProtKB" id="P00338"/>
    </source>
</evidence>
<evidence type="ECO:0000305" key="3"/>
<name>LDHA_XENLA</name>
<accession>P42120</accession>
<accession>Q68EZ4</accession>